<proteinExistence type="evidence at protein level"/>
<comment type="function">
    <text evidence="1 8 11">Plays a role in the synapse formation and synaptic transmission between cone photoreceptor cells and retinal bipolar cells (By similarity). Required for normal transmission of a light-evoked stimulus from the cone photoreceptor cells to the ON-bipolar cells and ON-ganglion cells in the inner retina (PubMed:28334377). Required in retinal ON-bipolar cells for normal localization of the cation channel TRPM1 at dendrite tips (By similarity). Seems to play a specific role in synaptic contacts made by ON-bipolar cells with cone photoreceptor pedicles (By similarity). May also have a role in cone synapse formation (By similarity). Might facilitate FGFR1 exit from the endoplasmic reticulum to the Golgi (PubMed:22673519). Could be a regulator of the FGFRs (PubMed:22673519).</text>
</comment>
<comment type="subcellular location">
    <subcellularLocation>
        <location evidence="9">Cell projection</location>
        <location evidence="9">Dendrite</location>
    </subcellularLocation>
    <subcellularLocation>
        <location evidence="1">Perikaryon</location>
    </subcellularLocation>
    <subcellularLocation>
        <location evidence="14">Endoplasmic reticulum membrane</location>
        <topology evidence="14">Single-pass type I membrane protein</topology>
    </subcellularLocation>
    <text evidence="9">Punctate expression at dendrite tips.</text>
</comment>
<comment type="alternative products">
    <event type="alternative splicing"/>
    <isoform>
        <id>Q3SXY7-1</id>
        <name>1</name>
        <sequence type="displayed"/>
    </isoform>
    <isoform>
        <id>Q3SXY7-2</id>
        <name>2</name>
        <sequence type="described" ref="VSP_029126 VSP_029127"/>
    </isoform>
</comment>
<comment type="tissue specificity">
    <text evidence="9">Detected in the outer plexiform layer (OPL) of the retina where it localizes to ON-bipolar cells (at protein level).</text>
</comment>
<comment type="PTM">
    <text evidence="8">Glycosylated.</text>
</comment>
<comment type="disease" evidence="9 10">
    <disease id="DI-03687">
        <name>Night blindness, congenital stationary, 1F</name>
        <acronym>CSNB1F</acronym>
        <description>An autosomal recessive form of congenital stationary night blindness, a non-progressive retinal disorder characterized by impaired night vision, often associated with nystagmus and myopia.</description>
        <dbReference type="MIM" id="615058"/>
    </disease>
    <text>The disease is caused by variants affecting the gene represented in this entry.</text>
</comment>
<comment type="sequence caution" evidence="14">
    <conflict type="erroneous initiation">
        <sequence resource="EMBL-CDS" id="AAI04038"/>
    </conflict>
    <text>Truncated N-terminus.</text>
</comment>
<name>LRIT3_HUMAN</name>
<reference key="1">
    <citation type="journal article" date="2004" name="Nat. Genet.">
        <title>Complete sequencing and characterization of 21,243 full-length human cDNAs.</title>
        <authorList>
            <person name="Ota T."/>
            <person name="Suzuki Y."/>
            <person name="Nishikawa T."/>
            <person name="Otsuki T."/>
            <person name="Sugiyama T."/>
            <person name="Irie R."/>
            <person name="Wakamatsu A."/>
            <person name="Hayashi K."/>
            <person name="Sato H."/>
            <person name="Nagai K."/>
            <person name="Kimura K."/>
            <person name="Makita H."/>
            <person name="Sekine M."/>
            <person name="Obayashi M."/>
            <person name="Nishi T."/>
            <person name="Shibahara T."/>
            <person name="Tanaka T."/>
            <person name="Ishii S."/>
            <person name="Yamamoto J."/>
            <person name="Saito K."/>
            <person name="Kawai Y."/>
            <person name="Isono Y."/>
            <person name="Nakamura Y."/>
            <person name="Nagahari K."/>
            <person name="Murakami K."/>
            <person name="Yasuda T."/>
            <person name="Iwayanagi T."/>
            <person name="Wagatsuma M."/>
            <person name="Shiratori A."/>
            <person name="Sudo H."/>
            <person name="Hosoiri T."/>
            <person name="Kaku Y."/>
            <person name="Kodaira H."/>
            <person name="Kondo H."/>
            <person name="Sugawara M."/>
            <person name="Takahashi M."/>
            <person name="Kanda K."/>
            <person name="Yokoi T."/>
            <person name="Furuya T."/>
            <person name="Kikkawa E."/>
            <person name="Omura Y."/>
            <person name="Abe K."/>
            <person name="Kamihara K."/>
            <person name="Katsuta N."/>
            <person name="Sato K."/>
            <person name="Tanikawa M."/>
            <person name="Yamazaki M."/>
            <person name="Ninomiya K."/>
            <person name="Ishibashi T."/>
            <person name="Yamashita H."/>
            <person name="Murakawa K."/>
            <person name="Fujimori K."/>
            <person name="Tanai H."/>
            <person name="Kimata M."/>
            <person name="Watanabe M."/>
            <person name="Hiraoka S."/>
            <person name="Chiba Y."/>
            <person name="Ishida S."/>
            <person name="Ono Y."/>
            <person name="Takiguchi S."/>
            <person name="Watanabe S."/>
            <person name="Yosida M."/>
            <person name="Hotuta T."/>
            <person name="Kusano J."/>
            <person name="Kanehori K."/>
            <person name="Takahashi-Fujii A."/>
            <person name="Hara H."/>
            <person name="Tanase T.-O."/>
            <person name="Nomura Y."/>
            <person name="Togiya S."/>
            <person name="Komai F."/>
            <person name="Hara R."/>
            <person name="Takeuchi K."/>
            <person name="Arita M."/>
            <person name="Imose N."/>
            <person name="Musashino K."/>
            <person name="Yuuki H."/>
            <person name="Oshima A."/>
            <person name="Sasaki N."/>
            <person name="Aotsuka S."/>
            <person name="Yoshikawa Y."/>
            <person name="Matsunawa H."/>
            <person name="Ichihara T."/>
            <person name="Shiohata N."/>
            <person name="Sano S."/>
            <person name="Moriya S."/>
            <person name="Momiyama H."/>
            <person name="Satoh N."/>
            <person name="Takami S."/>
            <person name="Terashima Y."/>
            <person name="Suzuki O."/>
            <person name="Nakagawa S."/>
            <person name="Senoh A."/>
            <person name="Mizoguchi H."/>
            <person name="Goto Y."/>
            <person name="Shimizu F."/>
            <person name="Wakebe H."/>
            <person name="Hishigaki H."/>
            <person name="Watanabe T."/>
            <person name="Sugiyama A."/>
            <person name="Takemoto M."/>
            <person name="Kawakami B."/>
            <person name="Yamazaki M."/>
            <person name="Watanabe K."/>
            <person name="Kumagai A."/>
            <person name="Itakura S."/>
            <person name="Fukuzumi Y."/>
            <person name="Fujimori Y."/>
            <person name="Komiyama M."/>
            <person name="Tashiro H."/>
            <person name="Tanigami A."/>
            <person name="Fujiwara T."/>
            <person name="Ono T."/>
            <person name="Yamada K."/>
            <person name="Fujii Y."/>
            <person name="Ozaki K."/>
            <person name="Hirao M."/>
            <person name="Ohmori Y."/>
            <person name="Kawabata A."/>
            <person name="Hikiji T."/>
            <person name="Kobatake N."/>
            <person name="Inagaki H."/>
            <person name="Ikema Y."/>
            <person name="Okamoto S."/>
            <person name="Okitani R."/>
            <person name="Kawakami T."/>
            <person name="Noguchi S."/>
            <person name="Itoh T."/>
            <person name="Shigeta K."/>
            <person name="Senba T."/>
            <person name="Matsumura K."/>
            <person name="Nakajima Y."/>
            <person name="Mizuno T."/>
            <person name="Morinaga M."/>
            <person name="Sasaki M."/>
            <person name="Togashi T."/>
            <person name="Oyama M."/>
            <person name="Hata H."/>
            <person name="Watanabe M."/>
            <person name="Komatsu T."/>
            <person name="Mizushima-Sugano J."/>
            <person name="Satoh T."/>
            <person name="Shirai Y."/>
            <person name="Takahashi Y."/>
            <person name="Nakagawa K."/>
            <person name="Okumura K."/>
            <person name="Nagase T."/>
            <person name="Nomura N."/>
            <person name="Kikuchi H."/>
            <person name="Masuho Y."/>
            <person name="Yamashita R."/>
            <person name="Nakai K."/>
            <person name="Yada T."/>
            <person name="Nakamura Y."/>
            <person name="Ohara O."/>
            <person name="Isogai T."/>
            <person name="Sugano S."/>
        </authorList>
    </citation>
    <scope>NUCLEOTIDE SEQUENCE [LARGE SCALE MRNA] (ISOFORM 2)</scope>
    <scope>VARIANT LEU-336</scope>
    <source>
        <tissue>Cerebellum</tissue>
    </source>
</reference>
<reference key="2">
    <citation type="journal article" date="2005" name="Nature">
        <title>Generation and annotation of the DNA sequences of human chromosomes 2 and 4.</title>
        <authorList>
            <person name="Hillier L.W."/>
            <person name="Graves T.A."/>
            <person name="Fulton R.S."/>
            <person name="Fulton L.A."/>
            <person name="Pepin K.H."/>
            <person name="Minx P."/>
            <person name="Wagner-McPherson C."/>
            <person name="Layman D."/>
            <person name="Wylie K."/>
            <person name="Sekhon M."/>
            <person name="Becker M.C."/>
            <person name="Fewell G.A."/>
            <person name="Delehaunty K.D."/>
            <person name="Miner T.L."/>
            <person name="Nash W.E."/>
            <person name="Kremitzki C."/>
            <person name="Oddy L."/>
            <person name="Du H."/>
            <person name="Sun H."/>
            <person name="Bradshaw-Cordum H."/>
            <person name="Ali J."/>
            <person name="Carter J."/>
            <person name="Cordes M."/>
            <person name="Harris A."/>
            <person name="Isak A."/>
            <person name="van Brunt A."/>
            <person name="Nguyen C."/>
            <person name="Du F."/>
            <person name="Courtney L."/>
            <person name="Kalicki J."/>
            <person name="Ozersky P."/>
            <person name="Abbott S."/>
            <person name="Armstrong J."/>
            <person name="Belter E.A."/>
            <person name="Caruso L."/>
            <person name="Cedroni M."/>
            <person name="Cotton M."/>
            <person name="Davidson T."/>
            <person name="Desai A."/>
            <person name="Elliott G."/>
            <person name="Erb T."/>
            <person name="Fronick C."/>
            <person name="Gaige T."/>
            <person name="Haakenson W."/>
            <person name="Haglund K."/>
            <person name="Holmes A."/>
            <person name="Harkins R."/>
            <person name="Kim K."/>
            <person name="Kruchowski S.S."/>
            <person name="Strong C.M."/>
            <person name="Grewal N."/>
            <person name="Goyea E."/>
            <person name="Hou S."/>
            <person name="Levy A."/>
            <person name="Martinka S."/>
            <person name="Mead K."/>
            <person name="McLellan M.D."/>
            <person name="Meyer R."/>
            <person name="Randall-Maher J."/>
            <person name="Tomlinson C."/>
            <person name="Dauphin-Kohlberg S."/>
            <person name="Kozlowicz-Reilly A."/>
            <person name="Shah N."/>
            <person name="Swearengen-Shahid S."/>
            <person name="Snider J."/>
            <person name="Strong J.T."/>
            <person name="Thompson J."/>
            <person name="Yoakum M."/>
            <person name="Leonard S."/>
            <person name="Pearman C."/>
            <person name="Trani L."/>
            <person name="Radionenko M."/>
            <person name="Waligorski J.E."/>
            <person name="Wang C."/>
            <person name="Rock S.M."/>
            <person name="Tin-Wollam A.-M."/>
            <person name="Maupin R."/>
            <person name="Latreille P."/>
            <person name="Wendl M.C."/>
            <person name="Yang S.-P."/>
            <person name="Pohl C."/>
            <person name="Wallis J.W."/>
            <person name="Spieth J."/>
            <person name="Bieri T.A."/>
            <person name="Berkowicz N."/>
            <person name="Nelson J.O."/>
            <person name="Osborne J."/>
            <person name="Ding L."/>
            <person name="Meyer R."/>
            <person name="Sabo A."/>
            <person name="Shotland Y."/>
            <person name="Sinha P."/>
            <person name="Wohldmann P.E."/>
            <person name="Cook L.L."/>
            <person name="Hickenbotham M.T."/>
            <person name="Eldred J."/>
            <person name="Williams D."/>
            <person name="Jones T.A."/>
            <person name="She X."/>
            <person name="Ciccarelli F.D."/>
            <person name="Izaurralde E."/>
            <person name="Taylor J."/>
            <person name="Schmutz J."/>
            <person name="Myers R.M."/>
            <person name="Cox D.R."/>
            <person name="Huang X."/>
            <person name="McPherson J.D."/>
            <person name="Mardis E.R."/>
            <person name="Clifton S.W."/>
            <person name="Warren W.C."/>
            <person name="Chinwalla A.T."/>
            <person name="Eddy S.R."/>
            <person name="Marra M.A."/>
            <person name="Ovcharenko I."/>
            <person name="Furey T.S."/>
            <person name="Miller W."/>
            <person name="Eichler E.E."/>
            <person name="Bork P."/>
            <person name="Suyama M."/>
            <person name="Torrents D."/>
            <person name="Waterston R.H."/>
            <person name="Wilson R.K."/>
        </authorList>
    </citation>
    <scope>NUCLEOTIDE SEQUENCE [LARGE SCALE GENOMIC DNA]</scope>
</reference>
<reference key="3">
    <citation type="submission" date="2005-07" db="EMBL/GenBank/DDBJ databases">
        <authorList>
            <person name="Mural R.J."/>
            <person name="Istrail S."/>
            <person name="Sutton G.G."/>
            <person name="Florea L."/>
            <person name="Halpern A.L."/>
            <person name="Mobarry C.M."/>
            <person name="Lippert R."/>
            <person name="Walenz B."/>
            <person name="Shatkay H."/>
            <person name="Dew I."/>
            <person name="Miller J.R."/>
            <person name="Flanigan M.J."/>
            <person name="Edwards N.J."/>
            <person name="Bolanos R."/>
            <person name="Fasulo D."/>
            <person name="Halldorsson B.V."/>
            <person name="Hannenhalli S."/>
            <person name="Turner R."/>
            <person name="Yooseph S."/>
            <person name="Lu F."/>
            <person name="Nusskern D.R."/>
            <person name="Shue B.C."/>
            <person name="Zheng X.H."/>
            <person name="Zhong F."/>
            <person name="Delcher A.L."/>
            <person name="Huson D.H."/>
            <person name="Kravitz S.A."/>
            <person name="Mouchard L."/>
            <person name="Reinert K."/>
            <person name="Remington K.A."/>
            <person name="Clark A.G."/>
            <person name="Waterman M.S."/>
            <person name="Eichler E.E."/>
            <person name="Adams M.D."/>
            <person name="Hunkapiller M.W."/>
            <person name="Myers E.W."/>
            <person name="Venter J.C."/>
        </authorList>
    </citation>
    <scope>NUCLEOTIDE SEQUENCE [LARGE SCALE GENOMIC DNA]</scope>
    <scope>VARIANT LEU-336</scope>
</reference>
<reference key="4">
    <citation type="journal article" date="2012" name="FEBS Lett.">
        <title>Leucine-rich repeat, immunoglobulin-like and transmembrane domain 3 (LRIT3) is a modulator of FGFR1.</title>
        <authorList>
            <person name="Kim S.D."/>
            <person name="Liu J.L."/>
            <person name="Roscioli T."/>
            <person name="Buckley M.F."/>
            <person name="Yagnik G."/>
            <person name="Boyadjiev S.A."/>
            <person name="Kim J."/>
        </authorList>
    </citation>
    <scope>NUCLEOTIDE SEQUENCE [MRNA] OF 1-83</scope>
    <scope>IDENTIFICATION OF EXON 1</scope>
    <scope>FUNCTION</scope>
    <scope>GLYCOSYLATION</scope>
    <scope>VARIANTS THR-494 AND TYR-592</scope>
    <scope>MUTAGENESIS OF THR-53</scope>
</reference>
<reference key="5">
    <citation type="journal article" date="2004" name="Genome Res.">
        <title>The status, quality, and expansion of the NIH full-length cDNA project: the Mammalian Gene Collection (MGC).</title>
        <authorList>
            <consortium name="The MGC Project Team"/>
        </authorList>
    </citation>
    <scope>NUCLEOTIDE SEQUENCE [LARGE SCALE MRNA] OF 108-634 (ISOFORM 1)</scope>
    <scope>VARIANTS ASN-175; THR-486 AND MET-503</scope>
</reference>
<reference key="6">
    <citation type="journal article" date="2017" name="Invest. Ophthalmol. Vis. Sci.">
        <title>LRIT3 Differentially Affects Connectivity and Synaptic Transmission of Cones to ON- and OFF-Bipolar Cells.</title>
        <authorList>
            <person name="Neuille M."/>
            <person name="Cao Y."/>
            <person name="Caplette R."/>
            <person name="Guerrero-Given D."/>
            <person name="Thomas C."/>
            <person name="Kamasawa N."/>
            <person name="Sahel J.A."/>
            <person name="Hamel C.P."/>
            <person name="Audo I."/>
            <person name="Picaud S."/>
            <person name="Martemyanov K.A."/>
            <person name="Zeitz C."/>
        </authorList>
    </citation>
    <scope>FUNCTION</scope>
</reference>
<reference key="7">
    <citation type="journal article" date="2013" name="Am. J. Hum. Genet.">
        <title>Whole-exome sequencing identifies LRIT3 mutations as a cause of autosomal-recessive complete congenital stationary night blindness.</title>
        <authorList>
            <consortium name="Congenital Stationary Night Blindness Consortium"/>
            <person name="Zeitz C."/>
            <person name="Jacobson S.G."/>
            <person name="Hamel C.P."/>
            <person name="Bujakowska K."/>
            <person name="Neuille M."/>
            <person name="Orhan E."/>
            <person name="Zanlonghi X."/>
            <person name="Lancelot M.E."/>
            <person name="Michiels C."/>
            <person name="Schwartz S.B."/>
            <person name="Bocquet B."/>
            <person name="Antonio A."/>
            <person name="Audier C."/>
            <person name="Letexier M."/>
            <person name="Saraiva J.P."/>
            <person name="Luu T.D."/>
            <person name="Sennlaub F."/>
            <person name="Nguyen H."/>
            <person name="Poch O."/>
            <person name="Dollfus H."/>
            <person name="Lecompte O."/>
            <person name="Kohl S."/>
            <person name="Sahel J.A."/>
            <person name="Bhattacharya S.S."/>
            <person name="Audo I."/>
        </authorList>
    </citation>
    <scope>VARIANT CSNB1F TYR-328</scope>
    <scope>SUBCELLULAR LOCATION</scope>
    <scope>TISSUE SPECIFICITY</scope>
</reference>
<reference key="8">
    <citation type="journal article" date="2017" name="Ophthalmic Genet.">
        <title>Mutation screening of the LRIT3, CABP4, and GPR179 genes in Chinese patients with Schubert-Bornschein congenital stationary night blindness.</title>
        <authorList>
            <person name="Dan H."/>
            <person name="Song X."/>
            <person name="Li J."/>
            <person name="Xing Y."/>
            <person name="Li T."/>
        </authorList>
    </citation>
    <scope>VARIANT CSNB1F LEU-203</scope>
</reference>
<gene>
    <name type="primary">LRIT3</name>
</gene>
<sequence>MHLFACLCIVLSFLEGVGCLCPSQCTCDYHGRNDGSGSRLVLCNDMDMNELPTNLPVDTVKLRIEKTVIRRISAEAFYYLVELQYLWVTYNSVASIDPSSFYNLKQLHELRLDGNSLAAFPWASLLDMPLLRTLDLHNNKITSVPNEALRYLKNLAYLDLSSNRLTTLPPDFLESWTHLVSTPSGVLDLSPSRIILGLQDNPWFCDCHISKMIELSKVVDPAIVLLDPLMTCSEPERLTGILFQRAELEHCLKPSVMTSATKIMSALGSNVLLRCDATGFPTPQITWTRSDSSPVNYTVIQESPEEGVRWSIMSLTGISSKDAGDYKCKAKNLAGMSEAVVTVTVLGITTTPIPPDTSERTGDHPEWDVQPGSGRSTSVSSASSYLWSSSFSPTSSFSASTLSPPSTASFSLSPFSSSTVSSTTTLSTSISASTTMANKRSFQLHQGGKRNLKVAKNGSKLPPASTSKKEELALLDQTMLTETNAAIENLRVVSETKESVTLTWNMINTTHNSAVTVLYSKYGGKDLLLLNADSSKNQVTIDGLEPGGQYMACVCPKGVPPQKDQCITFSTERVEGDDSQWSLLLVVTSTACVVILPLICFLLYKVCKLQCKSEPFWEDDLAKETYIQFETLFPRSQSVGELWTRSHRDDSEKLLLCSRSSVESQVTFKSEGSRPEYYC</sequence>
<protein>
    <recommendedName>
        <fullName>Leucine-rich repeat, immunoglobulin-like domain and transmembrane domain-containing protein 3</fullName>
    </recommendedName>
</protein>
<evidence type="ECO:0000250" key="1">
    <source>
        <dbReference type="UniProtKB" id="W8DXL4"/>
    </source>
</evidence>
<evidence type="ECO:0000255" key="2"/>
<evidence type="ECO:0000255" key="3">
    <source>
        <dbReference type="PROSITE-ProRule" id="PRU00114"/>
    </source>
</evidence>
<evidence type="ECO:0000255" key="4">
    <source>
        <dbReference type="PROSITE-ProRule" id="PRU00316"/>
    </source>
</evidence>
<evidence type="ECO:0000256" key="5">
    <source>
        <dbReference type="SAM" id="MobiDB-lite"/>
    </source>
</evidence>
<evidence type="ECO:0000269" key="6">
    <source>
    </source>
</evidence>
<evidence type="ECO:0000269" key="7">
    <source>
    </source>
</evidence>
<evidence type="ECO:0000269" key="8">
    <source>
    </source>
</evidence>
<evidence type="ECO:0000269" key="9">
    <source>
    </source>
</evidence>
<evidence type="ECO:0000269" key="10">
    <source>
    </source>
</evidence>
<evidence type="ECO:0000269" key="11">
    <source>
    </source>
</evidence>
<evidence type="ECO:0000269" key="12">
    <source ref="3"/>
</evidence>
<evidence type="ECO:0000303" key="13">
    <source>
    </source>
</evidence>
<evidence type="ECO:0000305" key="14"/>
<feature type="signal peptide" evidence="2">
    <location>
        <begin position="1"/>
        <end position="19"/>
    </location>
</feature>
<feature type="chain" id="PRO_0000309284" description="Leucine-rich repeat, immunoglobulin-like domain and transmembrane domain-containing protein 3">
    <location>
        <begin position="20"/>
        <end position="679"/>
    </location>
</feature>
<feature type="topological domain" description="Lumenal" evidence="14">
    <location>
        <begin position="20"/>
        <end position="582"/>
    </location>
</feature>
<feature type="transmembrane region" description="Helical" evidence="2">
    <location>
        <begin position="583"/>
        <end position="603"/>
    </location>
</feature>
<feature type="topological domain" description="Cytoplasmic" evidence="14">
    <location>
        <begin position="604"/>
        <end position="679"/>
    </location>
</feature>
<feature type="repeat" description="LRR 1">
    <location>
        <begin position="56"/>
        <end position="79"/>
    </location>
</feature>
<feature type="repeat" description="LRR 2">
    <location>
        <begin position="80"/>
        <end position="103"/>
    </location>
</feature>
<feature type="repeat" description="LRR 3">
    <location>
        <begin position="104"/>
        <end position="128"/>
    </location>
</feature>
<feature type="repeat" description="LRR 4">
    <location>
        <begin position="129"/>
        <end position="151"/>
    </location>
</feature>
<feature type="repeat" description="LRR 5">
    <location>
        <begin position="152"/>
        <end position="175"/>
    </location>
</feature>
<feature type="domain" description="LRRCT">
    <location>
        <begin position="201"/>
        <end position="253"/>
    </location>
</feature>
<feature type="domain" description="Ig-like">
    <location>
        <begin position="254"/>
        <end position="344"/>
    </location>
</feature>
<feature type="domain" description="Fibronectin type-III" evidence="4">
    <location>
        <begin position="486"/>
        <end position="574"/>
    </location>
</feature>
<feature type="region of interest" description="Disordered" evidence="5">
    <location>
        <begin position="351"/>
        <end position="375"/>
    </location>
</feature>
<feature type="compositionally biased region" description="Basic and acidic residues" evidence="5">
    <location>
        <begin position="357"/>
        <end position="367"/>
    </location>
</feature>
<feature type="glycosylation site" description="N-linked (GlcNAc...) asparagine" evidence="2">
    <location>
        <position position="296"/>
    </location>
</feature>
<feature type="disulfide bond" evidence="3">
    <location>
        <begin position="275"/>
        <end position="328"/>
    </location>
</feature>
<feature type="splice variant" id="VSP_029126" description="In isoform 2." evidence="13">
    <location>
        <begin position="46"/>
        <end position="183"/>
    </location>
</feature>
<feature type="splice variant" id="VSP_029127" description="In isoform 2." evidence="13">
    <original>SGVLDLSPSRIIL</original>
    <variation>MVEPHQEPRHSKV</variation>
    <location>
        <begin position="184"/>
        <end position="196"/>
    </location>
</feature>
<feature type="sequence variant" id="VAR_061317" description="In dbSNP:rs4698797." evidence="7">
    <original>S</original>
    <variation>N</variation>
    <location>
        <position position="175"/>
    </location>
</feature>
<feature type="sequence variant" id="VAR_081904" description="In CSNB1F; dbSNP:rs1734715976." evidence="10">
    <original>W</original>
    <variation>L</variation>
    <location>
        <position position="203"/>
    </location>
</feature>
<feature type="sequence variant" id="VAR_069746" description="In CSNB1F; dbSNP:rs376610215." evidence="9">
    <original>C</original>
    <variation>Y</variation>
    <location>
        <position position="328"/>
    </location>
</feature>
<feature type="sequence variant" id="VAR_036927" description="In dbSNP:rs764205." evidence="6 12">
    <original>M</original>
    <variation>L</variation>
    <location>
        <position position="336"/>
    </location>
</feature>
<feature type="sequence variant" id="VAR_036928" description="In dbSNP:rs2347131." evidence="7">
    <original>A</original>
    <variation>T</variation>
    <location>
        <position position="486"/>
    </location>
</feature>
<feature type="sequence variant" id="VAR_069133" description="In one non-syndromic craniosynostosis patient; uncertain significance; dbSNP:rs1734796086." evidence="8">
    <original>S</original>
    <variation>T</variation>
    <location>
        <position position="494"/>
    </location>
</feature>
<feature type="sequence variant" id="VAR_036929" description="In dbSNP:rs2347132." evidence="7">
    <original>T</original>
    <variation>M</variation>
    <location>
        <position position="503"/>
    </location>
</feature>
<feature type="sequence variant" id="VAR_069134" description="Found in a patient with non-syndromic craniosynostosis; uncertain significance; dbSNP:rs766899767." evidence="8">
    <original>C</original>
    <variation>Y</variation>
    <location>
        <position position="592"/>
    </location>
</feature>
<feature type="mutagenesis site" description="No effect on LRIT3 function." evidence="8">
    <original>T</original>
    <variation>M</variation>
    <location>
        <position position="53"/>
    </location>
</feature>
<feature type="sequence conflict" description="In Ref. 5; AAI04038." evidence="14" ref="5">
    <original>P</original>
    <variation>T</variation>
    <location>
        <position position="169"/>
    </location>
</feature>
<accession>Q3SXY7</accession>
<accession>C9J1C2</accession>
<accession>Q6ZTG1</accession>
<dbReference type="EMBL" id="AK126648">
    <property type="protein sequence ID" value="BAC86628.1"/>
    <property type="molecule type" value="mRNA"/>
</dbReference>
<dbReference type="EMBL" id="AC005509">
    <property type="status" value="NOT_ANNOTATED_CDS"/>
    <property type="molecule type" value="Genomic_DNA"/>
</dbReference>
<dbReference type="EMBL" id="CH471057">
    <property type="protein sequence ID" value="EAX06256.1"/>
    <property type="molecule type" value="Genomic_DNA"/>
</dbReference>
<dbReference type="EMBL" id="JQ354981">
    <property type="protein sequence ID" value="AFH56665.1"/>
    <property type="molecule type" value="mRNA"/>
</dbReference>
<dbReference type="EMBL" id="BC104037">
    <property type="protein sequence ID" value="AAI04038.1"/>
    <property type="status" value="ALT_INIT"/>
    <property type="molecule type" value="mRNA"/>
</dbReference>
<dbReference type="CCDS" id="CCDS3688.3">
    <molecule id="Q3SXY7-1"/>
</dbReference>
<dbReference type="RefSeq" id="NP_940908.3">
    <molecule id="Q3SXY7-1"/>
    <property type="nucleotide sequence ID" value="NM_198506.5"/>
</dbReference>
<dbReference type="SMR" id="Q3SXY7"/>
<dbReference type="BioGRID" id="131342">
    <property type="interactions" value="12"/>
</dbReference>
<dbReference type="FunCoup" id="Q3SXY7">
    <property type="interactions" value="1"/>
</dbReference>
<dbReference type="IntAct" id="Q3SXY7">
    <property type="interactions" value="5"/>
</dbReference>
<dbReference type="STRING" id="9606.ENSP00000469759"/>
<dbReference type="GlyCosmos" id="Q3SXY7">
    <property type="glycosylation" value="1 site, No reported glycans"/>
</dbReference>
<dbReference type="GlyGen" id="Q3SXY7">
    <property type="glycosylation" value="2 sites, 1 O-linked glycan (1 site)"/>
</dbReference>
<dbReference type="iPTMnet" id="Q3SXY7"/>
<dbReference type="PhosphoSitePlus" id="Q3SXY7"/>
<dbReference type="BioMuta" id="LRIT3"/>
<dbReference type="DMDM" id="476007838"/>
<dbReference type="MassIVE" id="Q3SXY7"/>
<dbReference type="PaxDb" id="9606-ENSP00000469759"/>
<dbReference type="PeptideAtlas" id="Q3SXY7"/>
<dbReference type="ProteomicsDB" id="61821">
    <molecule id="Q3SXY7-1"/>
</dbReference>
<dbReference type="ProteomicsDB" id="61822">
    <molecule id="Q3SXY7-2"/>
</dbReference>
<dbReference type="Antibodypedia" id="2679">
    <property type="antibodies" value="76 antibodies from 18 providers"/>
</dbReference>
<dbReference type="DNASU" id="345193"/>
<dbReference type="Ensembl" id="ENST00000594814.6">
    <molecule id="Q3SXY7-1"/>
    <property type="protein sequence ID" value="ENSP00000469759.1"/>
    <property type="gene ID" value="ENSG00000183423.12"/>
</dbReference>
<dbReference type="GeneID" id="345193"/>
<dbReference type="KEGG" id="hsa:345193"/>
<dbReference type="MANE-Select" id="ENST00000594814.6">
    <property type="protein sequence ID" value="ENSP00000469759.1"/>
    <property type="RefSeq nucleotide sequence ID" value="NM_198506.5"/>
    <property type="RefSeq protein sequence ID" value="NP_940908.3"/>
</dbReference>
<dbReference type="UCSC" id="uc031sgv.2">
    <molecule id="Q3SXY7-1"/>
    <property type="organism name" value="human"/>
</dbReference>
<dbReference type="AGR" id="HGNC:24783"/>
<dbReference type="CTD" id="345193"/>
<dbReference type="DisGeNET" id="345193"/>
<dbReference type="GeneCards" id="LRIT3"/>
<dbReference type="HGNC" id="HGNC:24783">
    <property type="gene designation" value="LRIT3"/>
</dbReference>
<dbReference type="HPA" id="ENSG00000183423">
    <property type="expression patterns" value="Tissue enriched (retina)"/>
</dbReference>
<dbReference type="MalaCards" id="LRIT3"/>
<dbReference type="MIM" id="615004">
    <property type="type" value="gene"/>
</dbReference>
<dbReference type="MIM" id="615058">
    <property type="type" value="phenotype"/>
</dbReference>
<dbReference type="neXtProt" id="NX_Q3SXY7"/>
<dbReference type="OpenTargets" id="ENSG00000183423"/>
<dbReference type="Orphanet" id="215">
    <property type="disease" value="Congenital stationary night blindness"/>
</dbReference>
<dbReference type="PharmGKB" id="PA162394355"/>
<dbReference type="VEuPathDB" id="HostDB:ENSG00000183423"/>
<dbReference type="eggNOG" id="KOG0619">
    <property type="taxonomic scope" value="Eukaryota"/>
</dbReference>
<dbReference type="eggNOG" id="KOG3510">
    <property type="taxonomic scope" value="Eukaryota"/>
</dbReference>
<dbReference type="GeneTree" id="ENSGT00940000156627"/>
<dbReference type="HOGENOM" id="CLU_019650_0_0_1"/>
<dbReference type="InParanoid" id="Q3SXY7"/>
<dbReference type="OMA" id="DMNEVPM"/>
<dbReference type="OrthoDB" id="9229163at2759"/>
<dbReference type="PAN-GO" id="Q3SXY7">
    <property type="GO annotations" value="0 GO annotations based on evolutionary models"/>
</dbReference>
<dbReference type="PhylomeDB" id="Q3SXY7"/>
<dbReference type="TreeFam" id="TF330861"/>
<dbReference type="PathwayCommons" id="Q3SXY7"/>
<dbReference type="BioGRID-ORCS" id="345193">
    <property type="hits" value="6 hits in 1138 CRISPR screens"/>
</dbReference>
<dbReference type="GenomeRNAi" id="345193"/>
<dbReference type="Pharos" id="Q3SXY7">
    <property type="development level" value="Tbio"/>
</dbReference>
<dbReference type="PRO" id="PR:Q3SXY7"/>
<dbReference type="Proteomes" id="UP000005640">
    <property type="component" value="Chromosome 4"/>
</dbReference>
<dbReference type="RNAct" id="Q3SXY7">
    <property type="molecule type" value="protein"/>
</dbReference>
<dbReference type="Bgee" id="ENSG00000183423">
    <property type="expression patterns" value="Expressed in male germ line stem cell (sensu Vertebrata) in testis and 81 other cell types or tissues"/>
</dbReference>
<dbReference type="ExpressionAtlas" id="Q3SXY7">
    <property type="expression patterns" value="baseline and differential"/>
</dbReference>
<dbReference type="GO" id="GO:0051286">
    <property type="term" value="C:cell tip"/>
    <property type="evidence" value="ECO:0007669"/>
    <property type="project" value="Ensembl"/>
</dbReference>
<dbReference type="GO" id="GO:0030425">
    <property type="term" value="C:dendrite"/>
    <property type="evidence" value="ECO:0007669"/>
    <property type="project" value="UniProtKB-SubCell"/>
</dbReference>
<dbReference type="GO" id="GO:0005789">
    <property type="term" value="C:endoplasmic reticulum membrane"/>
    <property type="evidence" value="ECO:0007669"/>
    <property type="project" value="UniProtKB-SubCell"/>
</dbReference>
<dbReference type="GO" id="GO:0043204">
    <property type="term" value="C:perikaryon"/>
    <property type="evidence" value="ECO:0007669"/>
    <property type="project" value="UniProtKB-SubCell"/>
</dbReference>
<dbReference type="GO" id="GO:0045202">
    <property type="term" value="C:synapse"/>
    <property type="evidence" value="ECO:0007669"/>
    <property type="project" value="GOC"/>
</dbReference>
<dbReference type="GO" id="GO:0010467">
    <property type="term" value="P:gene expression"/>
    <property type="evidence" value="ECO:0007669"/>
    <property type="project" value="Ensembl"/>
</dbReference>
<dbReference type="GO" id="GO:0008104">
    <property type="term" value="P:protein localization"/>
    <property type="evidence" value="ECO:0007669"/>
    <property type="project" value="Ensembl"/>
</dbReference>
<dbReference type="GO" id="GO:0040036">
    <property type="term" value="P:regulation of fibroblast growth factor receptor signaling pathway"/>
    <property type="evidence" value="ECO:0000314"/>
    <property type="project" value="UniProtKB"/>
</dbReference>
<dbReference type="GO" id="GO:0009416">
    <property type="term" value="P:response to light stimulus"/>
    <property type="evidence" value="ECO:0007669"/>
    <property type="project" value="Ensembl"/>
</dbReference>
<dbReference type="GO" id="GO:0060386">
    <property type="term" value="P:synapse assembly involved in innervation"/>
    <property type="evidence" value="ECO:0007669"/>
    <property type="project" value="Ensembl"/>
</dbReference>
<dbReference type="GO" id="GO:0099536">
    <property type="term" value="P:synaptic signaling"/>
    <property type="evidence" value="ECO:0007669"/>
    <property type="project" value="Ensembl"/>
</dbReference>
<dbReference type="GO" id="GO:0007601">
    <property type="term" value="P:visual perception"/>
    <property type="evidence" value="ECO:0007669"/>
    <property type="project" value="UniProtKB-KW"/>
</dbReference>
<dbReference type="CDD" id="cd00063">
    <property type="entry name" value="FN3"/>
    <property type="match status" value="1"/>
</dbReference>
<dbReference type="FunFam" id="3.80.10.10:FF:000058">
    <property type="entry name" value="immunoglobulin superfamily containing leucine-rich repeat protein 2"/>
    <property type="match status" value="1"/>
</dbReference>
<dbReference type="FunFam" id="2.60.40.10:FF:001368">
    <property type="entry name" value="Leucine rich repeat, Ig-like and transmembrane domains 3"/>
    <property type="match status" value="1"/>
</dbReference>
<dbReference type="FunFam" id="2.60.40.10:FF:000971">
    <property type="entry name" value="leucine-rich repeat, immunoglobulin-like domain and transmembrane domain-containing protein 3"/>
    <property type="match status" value="1"/>
</dbReference>
<dbReference type="Gene3D" id="2.60.40.10">
    <property type="entry name" value="Immunoglobulins"/>
    <property type="match status" value="2"/>
</dbReference>
<dbReference type="Gene3D" id="3.80.10.10">
    <property type="entry name" value="Ribonuclease Inhibitor"/>
    <property type="match status" value="1"/>
</dbReference>
<dbReference type="InterPro" id="IPR003961">
    <property type="entry name" value="FN3_dom"/>
</dbReference>
<dbReference type="InterPro" id="IPR036116">
    <property type="entry name" value="FN3_sf"/>
</dbReference>
<dbReference type="InterPro" id="IPR007110">
    <property type="entry name" value="Ig-like_dom"/>
</dbReference>
<dbReference type="InterPro" id="IPR036179">
    <property type="entry name" value="Ig-like_dom_sf"/>
</dbReference>
<dbReference type="InterPro" id="IPR013783">
    <property type="entry name" value="Ig-like_fold"/>
</dbReference>
<dbReference type="InterPro" id="IPR003599">
    <property type="entry name" value="Ig_sub"/>
</dbReference>
<dbReference type="InterPro" id="IPR003598">
    <property type="entry name" value="Ig_sub2"/>
</dbReference>
<dbReference type="InterPro" id="IPR001611">
    <property type="entry name" value="Leu-rich_rpt"/>
</dbReference>
<dbReference type="InterPro" id="IPR003591">
    <property type="entry name" value="Leu-rich_rpt_typical-subtyp"/>
</dbReference>
<dbReference type="InterPro" id="IPR050467">
    <property type="entry name" value="LRFN"/>
</dbReference>
<dbReference type="InterPro" id="IPR032675">
    <property type="entry name" value="LRR_dom_sf"/>
</dbReference>
<dbReference type="PANTHER" id="PTHR45842:SF8">
    <property type="entry name" value="LEUCINE-RICH REPEAT, IMMUNOGLOBULIN-LIKE DOMAIN AND TRANSMEMBRANE DOMAIN-CONTAINING PROTEIN 3"/>
    <property type="match status" value="1"/>
</dbReference>
<dbReference type="PANTHER" id="PTHR45842">
    <property type="entry name" value="SYNAPTIC ADHESION-LIKE MOLECULE SALM"/>
    <property type="match status" value="1"/>
</dbReference>
<dbReference type="Pfam" id="PF13927">
    <property type="entry name" value="Ig_3"/>
    <property type="match status" value="1"/>
</dbReference>
<dbReference type="Pfam" id="PF13855">
    <property type="entry name" value="LRR_8"/>
    <property type="match status" value="2"/>
</dbReference>
<dbReference type="PRINTS" id="PR00019">
    <property type="entry name" value="LEURICHRPT"/>
</dbReference>
<dbReference type="SMART" id="SM00409">
    <property type="entry name" value="IG"/>
    <property type="match status" value="1"/>
</dbReference>
<dbReference type="SMART" id="SM00408">
    <property type="entry name" value="IGc2"/>
    <property type="match status" value="1"/>
</dbReference>
<dbReference type="SMART" id="SM00369">
    <property type="entry name" value="LRR_TYP"/>
    <property type="match status" value="4"/>
</dbReference>
<dbReference type="SUPFAM" id="SSF49265">
    <property type="entry name" value="Fibronectin type III"/>
    <property type="match status" value="1"/>
</dbReference>
<dbReference type="SUPFAM" id="SSF48726">
    <property type="entry name" value="Immunoglobulin"/>
    <property type="match status" value="1"/>
</dbReference>
<dbReference type="SUPFAM" id="SSF52058">
    <property type="entry name" value="L domain-like"/>
    <property type="match status" value="1"/>
</dbReference>
<dbReference type="PROSITE" id="PS50853">
    <property type="entry name" value="FN3"/>
    <property type="match status" value="1"/>
</dbReference>
<dbReference type="PROSITE" id="PS50835">
    <property type="entry name" value="IG_LIKE"/>
    <property type="match status" value="1"/>
</dbReference>
<dbReference type="PROSITE" id="PS51450">
    <property type="entry name" value="LRR"/>
    <property type="match status" value="4"/>
</dbReference>
<keyword id="KW-0025">Alternative splicing</keyword>
<keyword id="KW-0966">Cell projection</keyword>
<keyword id="KW-1014">Congenital stationary night blindness</keyword>
<keyword id="KW-0225">Disease variant</keyword>
<keyword id="KW-1015">Disulfide bond</keyword>
<keyword id="KW-0256">Endoplasmic reticulum</keyword>
<keyword id="KW-0325">Glycoprotein</keyword>
<keyword id="KW-0393">Immunoglobulin domain</keyword>
<keyword id="KW-0433">Leucine-rich repeat</keyword>
<keyword id="KW-0472">Membrane</keyword>
<keyword id="KW-1267">Proteomics identification</keyword>
<keyword id="KW-1185">Reference proteome</keyword>
<keyword id="KW-0677">Repeat</keyword>
<keyword id="KW-0716">Sensory transduction</keyword>
<keyword id="KW-0732">Signal</keyword>
<keyword id="KW-0812">Transmembrane</keyword>
<keyword id="KW-1133">Transmembrane helix</keyword>
<keyword id="KW-0844">Vision</keyword>
<organism>
    <name type="scientific">Homo sapiens</name>
    <name type="common">Human</name>
    <dbReference type="NCBI Taxonomy" id="9606"/>
    <lineage>
        <taxon>Eukaryota</taxon>
        <taxon>Metazoa</taxon>
        <taxon>Chordata</taxon>
        <taxon>Craniata</taxon>
        <taxon>Vertebrata</taxon>
        <taxon>Euteleostomi</taxon>
        <taxon>Mammalia</taxon>
        <taxon>Eutheria</taxon>
        <taxon>Euarchontoglires</taxon>
        <taxon>Primates</taxon>
        <taxon>Haplorrhini</taxon>
        <taxon>Catarrhini</taxon>
        <taxon>Hominidae</taxon>
        <taxon>Homo</taxon>
    </lineage>
</organism>